<protein>
    <recommendedName>
        <fullName>Serine/threonine-protein kinase Sgk1</fullName>
        <ecNumber>2.7.11.1</ecNumber>
    </recommendedName>
    <alternativeName>
        <fullName>Serum/glucocorticoid-regulated kinase 1</fullName>
    </alternativeName>
</protein>
<gene>
    <name type="primary">SGK1</name>
    <name type="ORF">QtsA-19250</name>
</gene>
<evidence type="ECO:0000250" key="1"/>
<evidence type="ECO:0000250" key="2">
    <source>
        <dbReference type="UniProtKB" id="O00141"/>
    </source>
</evidence>
<evidence type="ECO:0000250" key="3">
    <source>
        <dbReference type="UniProtKB" id="Q9WVC6"/>
    </source>
</evidence>
<evidence type="ECO:0000255" key="4">
    <source>
        <dbReference type="PROSITE-ProRule" id="PRU00159"/>
    </source>
</evidence>
<evidence type="ECO:0000255" key="5">
    <source>
        <dbReference type="PROSITE-ProRule" id="PRU00618"/>
    </source>
</evidence>
<evidence type="ECO:0000255" key="6">
    <source>
        <dbReference type="PROSITE-ProRule" id="PRU10027"/>
    </source>
</evidence>
<evidence type="ECO:0000256" key="7">
    <source>
        <dbReference type="SAM" id="MobiDB-lite"/>
    </source>
</evidence>
<evidence type="ECO:0000305" key="8"/>
<organism>
    <name type="scientific">Macaca fascicularis</name>
    <name type="common">Crab-eating macaque</name>
    <name type="synonym">Cynomolgus monkey</name>
    <dbReference type="NCBI Taxonomy" id="9541"/>
    <lineage>
        <taxon>Eukaryota</taxon>
        <taxon>Metazoa</taxon>
        <taxon>Chordata</taxon>
        <taxon>Craniata</taxon>
        <taxon>Vertebrata</taxon>
        <taxon>Euteleostomi</taxon>
        <taxon>Mammalia</taxon>
        <taxon>Eutheria</taxon>
        <taxon>Euarchontoglires</taxon>
        <taxon>Primates</taxon>
        <taxon>Haplorrhini</taxon>
        <taxon>Catarrhini</taxon>
        <taxon>Cercopithecidae</taxon>
        <taxon>Cercopithecinae</taxon>
        <taxon>Macaca</taxon>
    </lineage>
</organism>
<keyword id="KW-0053">Apoptosis</keyword>
<keyword id="KW-0067">ATP-binding</keyword>
<keyword id="KW-1003">Cell membrane</keyword>
<keyword id="KW-0963">Cytoplasm</keyword>
<keyword id="KW-1015">Disulfide bond</keyword>
<keyword id="KW-0256">Endoplasmic reticulum</keyword>
<keyword id="KW-0418">Kinase</keyword>
<keyword id="KW-0472">Membrane</keyword>
<keyword id="KW-0496">Mitochondrion</keyword>
<keyword id="KW-0547">Nucleotide-binding</keyword>
<keyword id="KW-0539">Nucleus</keyword>
<keyword id="KW-0597">Phosphoprotein</keyword>
<keyword id="KW-1185">Reference proteome</keyword>
<keyword id="KW-0723">Serine/threonine-protein kinase</keyword>
<keyword id="KW-0346">Stress response</keyword>
<keyword id="KW-0808">Transferase</keyword>
<keyword id="KW-0832">Ubl conjugation</keyword>
<feature type="chain" id="PRO_0000380129" description="Serine/threonine-protein kinase Sgk1">
    <location>
        <begin position="1"/>
        <end position="431"/>
    </location>
</feature>
<feature type="domain" description="Protein kinase" evidence="4">
    <location>
        <begin position="98"/>
        <end position="355"/>
    </location>
</feature>
<feature type="domain" description="AGC-kinase C-terminal" evidence="5">
    <location>
        <begin position="356"/>
        <end position="431"/>
    </location>
</feature>
<feature type="region of interest" description="Necessary for localization to the mitochondria" evidence="1">
    <location>
        <begin position="1"/>
        <end position="60"/>
    </location>
</feature>
<feature type="region of interest" description="Disordered" evidence="7">
    <location>
        <begin position="66"/>
        <end position="92"/>
    </location>
</feature>
<feature type="short sequence motif" description="Nuclear localization signal" evidence="1">
    <location>
        <begin position="131"/>
        <end position="141"/>
    </location>
</feature>
<feature type="compositionally biased region" description="Polar residues" evidence="7">
    <location>
        <begin position="81"/>
        <end position="91"/>
    </location>
</feature>
<feature type="active site" description="Proton acceptor" evidence="4 6">
    <location>
        <position position="222"/>
    </location>
</feature>
<feature type="binding site" evidence="4">
    <location>
        <begin position="104"/>
        <end position="112"/>
    </location>
    <ligand>
        <name>ATP</name>
        <dbReference type="ChEBI" id="CHEBI:30616"/>
    </ligand>
</feature>
<feature type="binding site" evidence="4">
    <location>
        <position position="127"/>
    </location>
    <ligand>
        <name>ATP</name>
        <dbReference type="ChEBI" id="CHEBI:30616"/>
    </ligand>
</feature>
<feature type="modified residue" description="Phosphoserine" evidence="2">
    <location>
        <position position="74"/>
    </location>
</feature>
<feature type="modified residue" description="Phosphoserine; by MAPK7" evidence="2">
    <location>
        <position position="78"/>
    </location>
</feature>
<feature type="modified residue" description="Phosphothreonine; by PDPK1" evidence="2">
    <location>
        <position position="256"/>
    </location>
</feature>
<feature type="modified residue" description="Phosphothreonine; by PKA" evidence="2">
    <location>
        <position position="369"/>
    </location>
</feature>
<feature type="modified residue" description="Phosphoserine" evidence="2">
    <location>
        <position position="397"/>
    </location>
</feature>
<feature type="modified residue" description="Phosphoserine" evidence="2">
    <location>
        <position position="401"/>
    </location>
</feature>
<feature type="modified residue" description="Phosphoserine" evidence="2">
    <location>
        <position position="422"/>
    </location>
</feature>
<feature type="disulfide bond" description="Interchain (with C-258)" evidence="2">
    <location>
        <position position="193"/>
    </location>
</feature>
<feature type="disulfide bond" description="Interchain (with C-193)" evidence="2">
    <location>
        <position position="258"/>
    </location>
</feature>
<name>SGK1_MACFA</name>
<reference key="1">
    <citation type="submission" date="2005-06" db="EMBL/GenBank/DDBJ databases">
        <title>DNA sequences of macaque genes expressed in brain or testis and its evolutionary implications.</title>
        <authorList>
            <consortium name="International consortium for macaque cDNA sequencing and analysis"/>
        </authorList>
    </citation>
    <scope>NUCLEOTIDE SEQUENCE [LARGE SCALE MRNA]</scope>
    <source>
        <tissue>Testis</tissue>
    </source>
</reference>
<comment type="function">
    <text evidence="1">Serine/threonine-protein kinase which is involved in the regulation of a wide variety of ion channels, membrane transporters, cellular enzymes, transcription factors, neuronal excitability, cell growth, proliferation, survival, migration and apoptosis. Plays an important role in cellular stress response. Contributes to regulation of renal Na(+) retention, renal K(+) elimination, salt appetite, gastric acid secretion, intestinal Na(+)/H(+) exchange and nutrient transport, insulin-dependent salt sensitivity of blood pressure, salt sensitivity of peripheral glucose uptake, cardiac repolarization and memory consolidation. Up-regulates Na(+) channels: SCNN1A/ENAC, SCN5A and ASIC1/ACCN2, K(+) channels: KCNJ1/ROMK1, KCNA1-5, KCNQ1-5 and KCNE1, epithelial Ca(2+) channels: TRPV5 and TRPV6, chloride channels: BSND, CLCN2 and CFTR, glutamate transporters: SLC1A3/EAAT1, SLC1A2 /EAAT2, SLC1A1/EAAT3, SLC1A6/EAAT4 and SLC1A7/EAAT5, amino acid transporters: SLC1A5/ASCT2, SLC38A1/SN1 and SLC6A19, creatine transporter: SLC6A8, Na(+)/dicarboxylate cotransporter: SLC13A2/NADC1, Na(+)-dependent phosphate cotransporter: SLC34A2/NAPI-2B, glutamate receptor: GRIK2/GLUR6. Up-regulates carriers: SLC9A3/NHE3, SLC12A1/NKCC2, SLC12A3/NCC, SLC5A3/SMIT, SLC2A1/GLUT1, SLC5A1/SGLT1 and SLC15A2/PEPT2. Regulates enzymes: GSK3A/B, PMM2 and Na(+)/K(+) ATPase, and transcription factors: CTNNB1 and nuclear factor NF-kappa-B. Stimulates sodium transport into epithelial cells by enhancing the stability and expression of SCNN1A/ENAC. This is achieved by phosphorylating the NEDD4L ubiquitin E3 ligase, promoting its interaction with 14-3-3 proteins, thereby preventing it from binding to SCNN1A/ENAC and targeting it for degradation. Regulates store-operated Ca(+2) entry (SOCE) by stimulating ORAI1 and STIM1. Regulates KCNJ1/ROMK1 directly via its phosphorylation or indirectly via increased interaction with SLC9A3R2/NHERF2. Phosphorylates MDM2 and activates MDM2-dependent ubiquitination of p53/TP53. Phosphorylates MAPT/TAU and mediates microtubule depolymerization and neurite formation in hippocampal neurons. Phosphorylates SLC2A4/GLUT4 and up-regulates its activity. Phosphorylates APBB1/FE65 and promotes its localization to the nucleus. Phosphorylates MAPK1/ERK2 and activates it by enhancing its interaction with MAP2K1/MEK1 and MAP2K2/MEK2. Phosphorylates FBXW7 and plays an inhibitory role in the NOTCH1 signaling. Phosphorylates FOXO1 resulting in its relocalization from the nucleus to the cytoplasm. Phosphorylates FOXO3, promoting its exit from the nucleus and interference with FOXO3-dependent transcription. Phosphorylates BRAF and MAP3K3/MEKK3 and inhibits their activity. Phosphorylates SLC9A3/NHE3 in response to dexamethasone, resulting in its activation and increased localization at the cell membrane. Phosphorylates CREB1. Necessary for vascular remodeling during angiogenesis (By similarity).</text>
</comment>
<comment type="catalytic activity">
    <reaction>
        <text>L-seryl-[protein] + ATP = O-phospho-L-seryl-[protein] + ADP + H(+)</text>
        <dbReference type="Rhea" id="RHEA:17989"/>
        <dbReference type="Rhea" id="RHEA-COMP:9863"/>
        <dbReference type="Rhea" id="RHEA-COMP:11604"/>
        <dbReference type="ChEBI" id="CHEBI:15378"/>
        <dbReference type="ChEBI" id="CHEBI:29999"/>
        <dbReference type="ChEBI" id="CHEBI:30616"/>
        <dbReference type="ChEBI" id="CHEBI:83421"/>
        <dbReference type="ChEBI" id="CHEBI:456216"/>
        <dbReference type="EC" id="2.7.11.1"/>
    </reaction>
</comment>
<comment type="catalytic activity">
    <reaction>
        <text>L-threonyl-[protein] + ATP = O-phospho-L-threonyl-[protein] + ADP + H(+)</text>
        <dbReference type="Rhea" id="RHEA:46608"/>
        <dbReference type="Rhea" id="RHEA-COMP:11060"/>
        <dbReference type="Rhea" id="RHEA-COMP:11605"/>
        <dbReference type="ChEBI" id="CHEBI:15378"/>
        <dbReference type="ChEBI" id="CHEBI:30013"/>
        <dbReference type="ChEBI" id="CHEBI:30616"/>
        <dbReference type="ChEBI" id="CHEBI:61977"/>
        <dbReference type="ChEBI" id="CHEBI:456216"/>
        <dbReference type="EC" id="2.7.11.1"/>
    </reaction>
</comment>
<comment type="activity regulation">
    <text evidence="2 3">Two specific sites, one in the kinase domain (Thr-256) and the other in the C-terminal regulatory region (Ser-422), need to be phosphorylated for its full activation (By similarity). Phosphorylation at Ser-397 and Ser-401 are also essential for its activity (By similarity). Activated by WNK1, WNK2, WNK3 and WNK4; which promote phosphorylation by mTORC2 (By similarity).</text>
</comment>
<comment type="subunit">
    <text evidence="2">Homodimer; disulfide-linked. Forms a trimeric complex with FBXW7 and NOTCH1. Interacts with MAPK3/ERK1, MAPK1/ERK2, MAP2K1/MEK1, MAP2K2/MEK2, NEDD4, NEDD4L, MAPT/TAU, MAPK7, CREB1, SLC9A3R2/NHERF2 and KCNJ1/ROMK1. Associates with the mammalian target of rapamycin complex 2 (mTORC2) via an interaction with MAPKAP1/SIN1 (By similarity).</text>
</comment>
<comment type="subcellular location">
    <subcellularLocation>
        <location evidence="1">Cytoplasm</location>
    </subcellularLocation>
    <subcellularLocation>
        <location evidence="1">Nucleus</location>
    </subcellularLocation>
    <subcellularLocation>
        <location evidence="1">Endoplasmic reticulum membrane</location>
    </subcellularLocation>
    <subcellularLocation>
        <location evidence="1">Cell membrane</location>
    </subcellularLocation>
    <subcellularLocation>
        <location evidence="1">Mitochondrion</location>
    </subcellularLocation>
    <text evidence="1">The subcellular localization is controlled by the cell cycle, as well as by exposure to specific hormones and environmental stress stimuli. In proliferating cells, it shuttles between the nucleus and cytoplasm in synchrony with the cell cycle, and in serum/growth factor-stimulated cells it resides in the nucleus. In contrast, after exposure to environmental stress or treatment with glucocorticoids, it is detected in the cytoplasm and with certain stress conditions is associated with the mitochondria. In osmoregulation through the epithelial sodium channel, it can be localized to the cytoplasmic surface of the cell membrane. Nuclear, upon phosphorylation (By similarity).</text>
</comment>
<comment type="PTM">
    <text evidence="1">Regulated by phosphorylation. Activated by phosphorylation on Ser-422 by mTORC2, transforming it into a substrate for PDPK1 which phosphorylates it on Thr-256. Phosphorylation on Ser-397 and Ser-401 are also essential for its activity. Phosphorylation on Ser-78 by MAPK7 is required for growth factor-induced cell cycle progression (By similarity).</text>
</comment>
<comment type="PTM">
    <text evidence="1">Ubiquitinated by NEDD4L; which promotes proteasomal degradation. Ubiquitinated by SYVN1 at the endoplasmic reticulum; which promotes rapid proteasomal degradation and maintains a high turnover rate in resting cells (By similarity).</text>
</comment>
<comment type="similarity">
    <text evidence="8">Belongs to the protein kinase superfamily. AGC Ser/Thr protein kinase family.</text>
</comment>
<sequence>MTVKTEAAKGTLTYSRMRGMVAILIAFMKQRRMGLNDFIQKIANNSYACKHPEVQSILKISQPQEPELMNANPSPPPSPSQQINLGPSSNPHAKPSDFHFLKVIGKGSFGKVLLARHKAEEVFYAVKVLQKKAILKKKEEKHIMSERNVLLKNVKHPFLVGLHFSFQTADKLYFVLDYINGGELFYHLQRERCFLEPRARFYAAEIASALGYLHSLNIVYRDLKPENILLDSQGHIVLTDFGLCKENIEHNSTTSTFCGTPEYLAPEVLHKQPYDRTVDWWCLGAVLYEMLYGLPPFYSRNTAEMYDNILNKPLQLKPNITNSARHLLEGLLQKDRMKRLGAKDDFMEIKSHVFFSLINWDDLINKKITPPFNPNVSGPNDLRHFDPEFTEEPVPNSIGKSPDSILVTASVKEAAETFLGFSYAPPTDSFL</sequence>
<accession>Q4R633</accession>
<dbReference type="EC" id="2.7.11.1"/>
<dbReference type="EMBL" id="AB169357">
    <property type="protein sequence ID" value="BAE01442.1"/>
    <property type="molecule type" value="mRNA"/>
</dbReference>
<dbReference type="SMR" id="Q4R633"/>
<dbReference type="STRING" id="9541.ENSMFAP00000008089"/>
<dbReference type="eggNOG" id="KOG0598">
    <property type="taxonomic scope" value="Eukaryota"/>
</dbReference>
<dbReference type="Proteomes" id="UP000233100">
    <property type="component" value="Unplaced"/>
</dbReference>
<dbReference type="GO" id="GO:0005789">
    <property type="term" value="C:endoplasmic reticulum membrane"/>
    <property type="evidence" value="ECO:0007669"/>
    <property type="project" value="UniProtKB-SubCell"/>
</dbReference>
<dbReference type="GO" id="GO:0005739">
    <property type="term" value="C:mitochondrion"/>
    <property type="evidence" value="ECO:0007669"/>
    <property type="project" value="UniProtKB-SubCell"/>
</dbReference>
<dbReference type="GO" id="GO:0005634">
    <property type="term" value="C:nucleus"/>
    <property type="evidence" value="ECO:0007669"/>
    <property type="project" value="UniProtKB-SubCell"/>
</dbReference>
<dbReference type="GO" id="GO:0005886">
    <property type="term" value="C:plasma membrane"/>
    <property type="evidence" value="ECO:0007669"/>
    <property type="project" value="UniProtKB-SubCell"/>
</dbReference>
<dbReference type="GO" id="GO:0005524">
    <property type="term" value="F:ATP binding"/>
    <property type="evidence" value="ECO:0007669"/>
    <property type="project" value="UniProtKB-KW"/>
</dbReference>
<dbReference type="GO" id="GO:0106310">
    <property type="term" value="F:protein serine kinase activity"/>
    <property type="evidence" value="ECO:0007669"/>
    <property type="project" value="RHEA"/>
</dbReference>
<dbReference type="GO" id="GO:0004674">
    <property type="term" value="F:protein serine/threonine kinase activity"/>
    <property type="evidence" value="ECO:0007669"/>
    <property type="project" value="UniProtKB-KW"/>
</dbReference>
<dbReference type="GO" id="GO:0006915">
    <property type="term" value="P:apoptotic process"/>
    <property type="evidence" value="ECO:0007669"/>
    <property type="project" value="UniProtKB-KW"/>
</dbReference>
<dbReference type="CDD" id="cd05602">
    <property type="entry name" value="STKc_SGK1"/>
    <property type="match status" value="1"/>
</dbReference>
<dbReference type="FunFam" id="1.10.510.10:FF:000065">
    <property type="entry name" value="Non-specific serine/threonine protein kinase"/>
    <property type="match status" value="1"/>
</dbReference>
<dbReference type="FunFam" id="3.30.200.20:FF:000030">
    <property type="entry name" value="Non-specific serine/threonine protein kinase"/>
    <property type="match status" value="1"/>
</dbReference>
<dbReference type="Gene3D" id="3.30.200.20">
    <property type="entry name" value="Phosphorylase Kinase, domain 1"/>
    <property type="match status" value="1"/>
</dbReference>
<dbReference type="Gene3D" id="1.10.510.10">
    <property type="entry name" value="Transferase(Phosphotransferase) domain 1"/>
    <property type="match status" value="1"/>
</dbReference>
<dbReference type="InterPro" id="IPR000961">
    <property type="entry name" value="AGC-kinase_C"/>
</dbReference>
<dbReference type="InterPro" id="IPR011009">
    <property type="entry name" value="Kinase-like_dom_sf"/>
</dbReference>
<dbReference type="InterPro" id="IPR017892">
    <property type="entry name" value="Pkinase_C"/>
</dbReference>
<dbReference type="InterPro" id="IPR000719">
    <property type="entry name" value="Prot_kinase_dom"/>
</dbReference>
<dbReference type="InterPro" id="IPR017441">
    <property type="entry name" value="Protein_kinase_ATP_BS"/>
</dbReference>
<dbReference type="InterPro" id="IPR008271">
    <property type="entry name" value="Ser/Thr_kinase_AS"/>
</dbReference>
<dbReference type="PANTHER" id="PTHR24351">
    <property type="entry name" value="RIBOSOMAL PROTEIN S6 KINASE"/>
    <property type="match status" value="1"/>
</dbReference>
<dbReference type="Pfam" id="PF00069">
    <property type="entry name" value="Pkinase"/>
    <property type="match status" value="1"/>
</dbReference>
<dbReference type="Pfam" id="PF00433">
    <property type="entry name" value="Pkinase_C"/>
    <property type="match status" value="1"/>
</dbReference>
<dbReference type="SMART" id="SM00133">
    <property type="entry name" value="S_TK_X"/>
    <property type="match status" value="1"/>
</dbReference>
<dbReference type="SMART" id="SM00220">
    <property type="entry name" value="S_TKc"/>
    <property type="match status" value="1"/>
</dbReference>
<dbReference type="SUPFAM" id="SSF56112">
    <property type="entry name" value="Protein kinase-like (PK-like)"/>
    <property type="match status" value="1"/>
</dbReference>
<dbReference type="PROSITE" id="PS51285">
    <property type="entry name" value="AGC_KINASE_CTER"/>
    <property type="match status" value="1"/>
</dbReference>
<dbReference type="PROSITE" id="PS00107">
    <property type="entry name" value="PROTEIN_KINASE_ATP"/>
    <property type="match status" value="1"/>
</dbReference>
<dbReference type="PROSITE" id="PS50011">
    <property type="entry name" value="PROTEIN_KINASE_DOM"/>
    <property type="match status" value="1"/>
</dbReference>
<dbReference type="PROSITE" id="PS00108">
    <property type="entry name" value="PROTEIN_KINASE_ST"/>
    <property type="match status" value="1"/>
</dbReference>
<proteinExistence type="evidence at transcript level"/>